<comment type="function">
    <text>DNA-binding protein that recognizes oligo(A).oligo(T) tracts (A.T DNA). Can bind to any 11 bp sequence in which 10 bases conform to an uninterrupted oligo(A).oligo(T) tract.</text>
</comment>
<comment type="subunit">
    <text>Binds as a dimer or higher oligomer.</text>
</comment>
<comment type="miscellaneous">
    <text evidence="2">Present with 4700 molecules/cell in log phase SD medium.</text>
</comment>
<sequence>MAKTLAQGRKPGSGRKPGKGKTLREGRKPGSGRRRRQDTGGKETDGSQQDQESRLISSRDMEAVDALRELTHSPSSHSAHNSSAAPPPHAAAASTSLPPSLDYTHQSFMDQQQQQQQQQQQQLLQQQRVDVVPPKPFITHKILLSSTGNSGGHVNSNYNADHSINHNSNHNLNSNVNVNMNFTINGSNQDPSSSFLMGPYNYLQRPFIVKPYLDLSTSTAASNQPRTQPSPAAHITKNSDSTEKNATI</sequence>
<proteinExistence type="evidence at protein level"/>
<keyword id="KW-0238">DNA-binding</keyword>
<keyword id="KW-1185">Reference proteome</keyword>
<keyword id="KW-0677">Repeat</keyword>
<feature type="chain" id="PRO_0000079787" description="Oligo(A)/oligo(T)-binding protein">
    <location>
        <begin position="1"/>
        <end position="248"/>
    </location>
</feature>
<feature type="repeat" description="1">
    <location>
        <begin position="8"/>
        <end position="12"/>
    </location>
</feature>
<feature type="repeat" description="2">
    <location>
        <begin position="14"/>
        <end position="18"/>
    </location>
</feature>
<feature type="repeat" description="3">
    <location>
        <begin position="26"/>
        <end position="30"/>
    </location>
</feature>
<feature type="DNA-binding region">
    <location>
        <begin position="1"/>
        <end position="36"/>
    </location>
</feature>
<feature type="region of interest" description="Disordered" evidence="1">
    <location>
        <begin position="1"/>
        <end position="127"/>
    </location>
</feature>
<feature type="region of interest" description="3 X 5 AA repeats of G-R-K-P-G">
    <location>
        <begin position="8"/>
        <end position="30"/>
    </location>
</feature>
<feature type="region of interest" description="Disordered" evidence="1">
    <location>
        <begin position="219"/>
        <end position="248"/>
    </location>
</feature>
<feature type="compositionally biased region" description="Basic residues" evidence="1">
    <location>
        <begin position="12"/>
        <end position="21"/>
    </location>
</feature>
<feature type="compositionally biased region" description="Basic and acidic residues" evidence="1">
    <location>
        <begin position="37"/>
        <end position="71"/>
    </location>
</feature>
<feature type="compositionally biased region" description="Low complexity" evidence="1">
    <location>
        <begin position="72"/>
        <end position="100"/>
    </location>
</feature>
<feature type="compositionally biased region" description="Low complexity" evidence="1">
    <location>
        <begin position="111"/>
        <end position="127"/>
    </location>
</feature>
<name>DATI_YEAST</name>
<protein>
    <recommendedName>
        <fullName>Oligo(A)/oligo(T)-binding protein</fullName>
    </recommendedName>
    <alternativeName>
        <fullName>Datin</fullName>
    </alternativeName>
</protein>
<organism>
    <name type="scientific">Saccharomyces cerevisiae (strain ATCC 204508 / S288c)</name>
    <name type="common">Baker's yeast</name>
    <dbReference type="NCBI Taxonomy" id="559292"/>
    <lineage>
        <taxon>Eukaryota</taxon>
        <taxon>Fungi</taxon>
        <taxon>Dikarya</taxon>
        <taxon>Ascomycota</taxon>
        <taxon>Saccharomycotina</taxon>
        <taxon>Saccharomycetes</taxon>
        <taxon>Saccharomycetales</taxon>
        <taxon>Saccharomycetaceae</taxon>
        <taxon>Saccharomyces</taxon>
    </lineage>
</organism>
<reference key="1">
    <citation type="journal article" date="1989" name="EMBO J.">
        <title>A DNA binding protein that recognizes oligo(dA).oligo(dT) tracts.</title>
        <authorList>
            <person name="Winter E."/>
            <person name="Varshavsky A."/>
        </authorList>
    </citation>
    <scope>NUCLEOTIDE SEQUENCE [GENOMIC DNA]</scope>
</reference>
<reference key="2">
    <citation type="journal article" date="1997" name="Nature">
        <title>The nucleotide sequence of Saccharomyces cerevisiae chromosome XIII.</title>
        <authorList>
            <person name="Bowman S."/>
            <person name="Churcher C.M."/>
            <person name="Badcock K."/>
            <person name="Brown D."/>
            <person name="Chillingworth T."/>
            <person name="Connor R."/>
            <person name="Dedman K."/>
            <person name="Devlin K."/>
            <person name="Gentles S."/>
            <person name="Hamlin N."/>
            <person name="Hunt S."/>
            <person name="Jagels K."/>
            <person name="Lye G."/>
            <person name="Moule S."/>
            <person name="Odell C."/>
            <person name="Pearson D."/>
            <person name="Rajandream M.A."/>
            <person name="Rice P."/>
            <person name="Skelton J."/>
            <person name="Walsh S.V."/>
            <person name="Whitehead S."/>
            <person name="Barrell B.G."/>
        </authorList>
    </citation>
    <scope>NUCLEOTIDE SEQUENCE [LARGE SCALE GENOMIC DNA]</scope>
    <source>
        <strain>ATCC 204508 / S288c</strain>
    </source>
</reference>
<reference key="3">
    <citation type="journal article" date="2014" name="G3 (Bethesda)">
        <title>The reference genome sequence of Saccharomyces cerevisiae: Then and now.</title>
        <authorList>
            <person name="Engel S.R."/>
            <person name="Dietrich F.S."/>
            <person name="Fisk D.G."/>
            <person name="Binkley G."/>
            <person name="Balakrishnan R."/>
            <person name="Costanzo M.C."/>
            <person name="Dwight S.S."/>
            <person name="Hitz B.C."/>
            <person name="Karra K."/>
            <person name="Nash R.S."/>
            <person name="Weng S."/>
            <person name="Wong E.D."/>
            <person name="Lloyd P."/>
            <person name="Skrzypek M.S."/>
            <person name="Miyasato S.R."/>
            <person name="Simison M."/>
            <person name="Cherry J.M."/>
        </authorList>
    </citation>
    <scope>GENOME REANNOTATION</scope>
    <source>
        <strain>ATCC 204508 / S288c</strain>
    </source>
</reference>
<reference key="4">
    <citation type="journal article" date="2007" name="Genome Res.">
        <title>Approaching a complete repository of sequence-verified protein-encoding clones for Saccharomyces cerevisiae.</title>
        <authorList>
            <person name="Hu Y."/>
            <person name="Rolfs A."/>
            <person name="Bhullar B."/>
            <person name="Murthy T.V.S."/>
            <person name="Zhu C."/>
            <person name="Berger M.F."/>
            <person name="Camargo A.A."/>
            <person name="Kelley F."/>
            <person name="McCarron S."/>
            <person name="Jepson D."/>
            <person name="Richardson A."/>
            <person name="Raphael J."/>
            <person name="Moreira D."/>
            <person name="Taycher E."/>
            <person name="Zuo D."/>
            <person name="Mohr S."/>
            <person name="Kane M.F."/>
            <person name="Williamson J."/>
            <person name="Simpson A.J.G."/>
            <person name="Bulyk M.L."/>
            <person name="Harlow E."/>
            <person name="Marsischky G."/>
            <person name="Kolodner R.D."/>
            <person name="LaBaer J."/>
        </authorList>
    </citation>
    <scope>NUCLEOTIDE SEQUENCE [GENOMIC DNA]</scope>
    <source>
        <strain>ATCC 204508 / S288c</strain>
    </source>
</reference>
<reference key="5">
    <citation type="journal article" date="1995" name="Nucleic Acids Res.">
        <title>DNA binding properties of the Saccharomyces cerevisiae DAT1 gene product.</title>
        <authorList>
            <person name="Reardon B.J."/>
            <person name="Gordon D."/>
            <person name="Ballard M.J."/>
            <person name="Winter E."/>
        </authorList>
    </citation>
    <scope>CHARACTERIZATION</scope>
</reference>
<reference key="6">
    <citation type="journal article" date="2003" name="Nature">
        <title>Global analysis of protein expression in yeast.</title>
        <authorList>
            <person name="Ghaemmaghami S."/>
            <person name="Huh W.-K."/>
            <person name="Bower K."/>
            <person name="Howson R.W."/>
            <person name="Belle A."/>
            <person name="Dephoure N."/>
            <person name="O'Shea E.K."/>
            <person name="Weissman J.S."/>
        </authorList>
    </citation>
    <scope>LEVEL OF PROTEIN EXPRESSION [LARGE SCALE ANALYSIS]</scope>
</reference>
<reference key="7">
    <citation type="journal article" date="2012" name="Proc. Natl. Acad. Sci. U.S.A.">
        <title>N-terminal acetylome analyses and functional insights of the N-terminal acetyltransferase NatB.</title>
        <authorList>
            <person name="Van Damme P."/>
            <person name="Lasa M."/>
            <person name="Polevoda B."/>
            <person name="Gazquez C."/>
            <person name="Elosegui-Artola A."/>
            <person name="Kim D.S."/>
            <person name="De Juan-Pardo E."/>
            <person name="Demeyer K."/>
            <person name="Hole K."/>
            <person name="Larrea E."/>
            <person name="Timmerman E."/>
            <person name="Prieto J."/>
            <person name="Arnesen T."/>
            <person name="Sherman F."/>
            <person name="Gevaert K."/>
            <person name="Aldabe R."/>
        </authorList>
    </citation>
    <scope>IDENTIFICATION BY MASS SPECTROMETRY [LARGE SCALE ANALYSIS]</scope>
</reference>
<evidence type="ECO:0000256" key="1">
    <source>
        <dbReference type="SAM" id="MobiDB-lite"/>
    </source>
</evidence>
<evidence type="ECO:0000269" key="2">
    <source>
    </source>
</evidence>
<accession>P13483</accession>
<accession>D6W0H1</accession>
<gene>
    <name type="primary">DAT1</name>
    <name type="synonym">DAT</name>
    <name type="ordered locus">YML113W</name>
    <name type="ORF">YM8339.06</name>
</gene>
<dbReference type="EMBL" id="X15478">
    <property type="protein sequence ID" value="CAA33505.1"/>
    <property type="molecule type" value="Genomic_DNA"/>
</dbReference>
<dbReference type="EMBL" id="Z49210">
    <property type="protein sequence ID" value="CAA89105.1"/>
    <property type="molecule type" value="Genomic_DNA"/>
</dbReference>
<dbReference type="EMBL" id="AY557765">
    <property type="protein sequence ID" value="AAS56091.1"/>
    <property type="molecule type" value="Genomic_DNA"/>
</dbReference>
<dbReference type="EMBL" id="BK006946">
    <property type="protein sequence ID" value="DAA09785.1"/>
    <property type="molecule type" value="Genomic_DNA"/>
</dbReference>
<dbReference type="PIR" id="S22853">
    <property type="entry name" value="S22853"/>
</dbReference>
<dbReference type="RefSeq" id="NP_013594.1">
    <property type="nucleotide sequence ID" value="NM_001182475.1"/>
</dbReference>
<dbReference type="SMR" id="P13483"/>
<dbReference type="BioGRID" id="35091">
    <property type="interactions" value="97"/>
</dbReference>
<dbReference type="FunCoup" id="P13483">
    <property type="interactions" value="55"/>
</dbReference>
<dbReference type="STRING" id="4932.YML113W"/>
<dbReference type="iPTMnet" id="P13483"/>
<dbReference type="PaxDb" id="4932-YML113W"/>
<dbReference type="PeptideAtlas" id="P13483"/>
<dbReference type="EnsemblFungi" id="YML113W_mRNA">
    <property type="protein sequence ID" value="YML113W"/>
    <property type="gene ID" value="YML113W"/>
</dbReference>
<dbReference type="GeneID" id="854927"/>
<dbReference type="KEGG" id="sce:YML113W"/>
<dbReference type="AGR" id="SGD:S000004581"/>
<dbReference type="SGD" id="S000004581">
    <property type="gene designation" value="DAT1"/>
</dbReference>
<dbReference type="VEuPathDB" id="FungiDB:YML113W"/>
<dbReference type="eggNOG" id="ENOG502SC3B">
    <property type="taxonomic scope" value="Eukaryota"/>
</dbReference>
<dbReference type="HOGENOM" id="CLU_1134320_0_0_1"/>
<dbReference type="InParanoid" id="P13483"/>
<dbReference type="OMA" id="TXNGSNQ"/>
<dbReference type="OrthoDB" id="4070651at2759"/>
<dbReference type="BioCyc" id="YEAST:G3O-32695-MONOMER"/>
<dbReference type="BioGRID-ORCS" id="854927">
    <property type="hits" value="5 hits in 13 CRISPR screens"/>
</dbReference>
<dbReference type="PRO" id="PR:P13483"/>
<dbReference type="Proteomes" id="UP000002311">
    <property type="component" value="Chromosome XIII"/>
</dbReference>
<dbReference type="RNAct" id="P13483">
    <property type="molecule type" value="protein"/>
</dbReference>
<dbReference type="GO" id="GO:0005829">
    <property type="term" value="C:cytosol"/>
    <property type="evidence" value="ECO:0000314"/>
    <property type="project" value="SGD"/>
</dbReference>
<dbReference type="GO" id="GO:0005634">
    <property type="term" value="C:nucleus"/>
    <property type="evidence" value="ECO:0000314"/>
    <property type="project" value="SGD"/>
</dbReference>
<dbReference type="GO" id="GO:0003680">
    <property type="term" value="F:minor groove of adenine-thymine-rich DNA binding"/>
    <property type="evidence" value="ECO:0000314"/>
    <property type="project" value="SGD"/>
</dbReference>
<dbReference type="GO" id="GO:0000122">
    <property type="term" value="P:negative regulation of transcription by RNA polymerase II"/>
    <property type="evidence" value="ECO:0000315"/>
    <property type="project" value="SGD"/>
</dbReference>